<keyword id="KW-0665">Pyrimidine biosynthesis</keyword>
<keyword id="KW-0808">Transferase</keyword>
<name>PYRB_STAAC</name>
<evidence type="ECO:0000255" key="1">
    <source>
        <dbReference type="HAMAP-Rule" id="MF_00001"/>
    </source>
</evidence>
<protein>
    <recommendedName>
        <fullName evidence="1">Aspartate carbamoyltransferase catalytic subunit</fullName>
        <ecNumber evidence="1">2.1.3.2</ecNumber>
    </recommendedName>
    <alternativeName>
        <fullName evidence="1">Aspartate transcarbamylase</fullName>
        <shortName evidence="1">ATCase</shortName>
    </alternativeName>
</protein>
<comment type="function">
    <text evidence="1">Catalyzes the condensation of carbamoyl phosphate and aspartate to form carbamoyl aspartate and inorganic phosphate, the committed step in the de novo pyrimidine nucleotide biosynthesis pathway.</text>
</comment>
<comment type="catalytic activity">
    <reaction evidence="1">
        <text>carbamoyl phosphate + L-aspartate = N-carbamoyl-L-aspartate + phosphate + H(+)</text>
        <dbReference type="Rhea" id="RHEA:20013"/>
        <dbReference type="ChEBI" id="CHEBI:15378"/>
        <dbReference type="ChEBI" id="CHEBI:29991"/>
        <dbReference type="ChEBI" id="CHEBI:32814"/>
        <dbReference type="ChEBI" id="CHEBI:43474"/>
        <dbReference type="ChEBI" id="CHEBI:58228"/>
        <dbReference type="EC" id="2.1.3.2"/>
    </reaction>
</comment>
<comment type="pathway">
    <text evidence="1">Pyrimidine metabolism; UMP biosynthesis via de novo pathway; (S)-dihydroorotate from bicarbonate: step 2/3.</text>
</comment>
<comment type="subunit">
    <text evidence="1">Heterododecamer (2C3:3R2) of six catalytic PyrB chains organized as two trimers (C3), and six regulatory PyrI chains organized as three dimers (R2).</text>
</comment>
<comment type="similarity">
    <text evidence="1">Belongs to the aspartate/ornithine carbamoyltransferase superfamily. ATCase family.</text>
</comment>
<dbReference type="EC" id="2.1.3.2" evidence="1"/>
<dbReference type="EMBL" id="CP000046">
    <property type="protein sequence ID" value="AAW38049.1"/>
    <property type="molecule type" value="Genomic_DNA"/>
</dbReference>
<dbReference type="RefSeq" id="WP_001016166.1">
    <property type="nucleotide sequence ID" value="NZ_JBGOFO010000002.1"/>
</dbReference>
<dbReference type="SMR" id="Q5HGN2"/>
<dbReference type="KEGG" id="sac:SACOL1212"/>
<dbReference type="HOGENOM" id="CLU_043846_2_1_9"/>
<dbReference type="UniPathway" id="UPA00070">
    <property type="reaction ID" value="UER00116"/>
</dbReference>
<dbReference type="Proteomes" id="UP000000530">
    <property type="component" value="Chromosome"/>
</dbReference>
<dbReference type="GO" id="GO:0005829">
    <property type="term" value="C:cytosol"/>
    <property type="evidence" value="ECO:0007669"/>
    <property type="project" value="TreeGrafter"/>
</dbReference>
<dbReference type="GO" id="GO:0016597">
    <property type="term" value="F:amino acid binding"/>
    <property type="evidence" value="ECO:0007669"/>
    <property type="project" value="InterPro"/>
</dbReference>
<dbReference type="GO" id="GO:0004070">
    <property type="term" value="F:aspartate carbamoyltransferase activity"/>
    <property type="evidence" value="ECO:0007669"/>
    <property type="project" value="UniProtKB-UniRule"/>
</dbReference>
<dbReference type="GO" id="GO:0006207">
    <property type="term" value="P:'de novo' pyrimidine nucleobase biosynthetic process"/>
    <property type="evidence" value="ECO:0007669"/>
    <property type="project" value="InterPro"/>
</dbReference>
<dbReference type="GO" id="GO:0044205">
    <property type="term" value="P:'de novo' UMP biosynthetic process"/>
    <property type="evidence" value="ECO:0007669"/>
    <property type="project" value="UniProtKB-UniRule"/>
</dbReference>
<dbReference type="GO" id="GO:0006520">
    <property type="term" value="P:amino acid metabolic process"/>
    <property type="evidence" value="ECO:0007669"/>
    <property type="project" value="InterPro"/>
</dbReference>
<dbReference type="FunFam" id="3.40.50.1370:FF:000011">
    <property type="entry name" value="Aspartate carbamoyltransferase"/>
    <property type="match status" value="1"/>
</dbReference>
<dbReference type="Gene3D" id="3.40.50.1370">
    <property type="entry name" value="Aspartate/ornithine carbamoyltransferase"/>
    <property type="match status" value="2"/>
</dbReference>
<dbReference type="HAMAP" id="MF_00001">
    <property type="entry name" value="Asp_carb_tr"/>
    <property type="match status" value="1"/>
</dbReference>
<dbReference type="InterPro" id="IPR006132">
    <property type="entry name" value="Asp/Orn_carbamoyltranf_P-bd"/>
</dbReference>
<dbReference type="InterPro" id="IPR006130">
    <property type="entry name" value="Asp/Orn_carbamoylTrfase"/>
</dbReference>
<dbReference type="InterPro" id="IPR036901">
    <property type="entry name" value="Asp/Orn_carbamoylTrfase_sf"/>
</dbReference>
<dbReference type="InterPro" id="IPR002082">
    <property type="entry name" value="Asp_carbamoyltransf"/>
</dbReference>
<dbReference type="InterPro" id="IPR006131">
    <property type="entry name" value="Asp_carbamoyltransf_Asp/Orn-bd"/>
</dbReference>
<dbReference type="NCBIfam" id="TIGR00670">
    <property type="entry name" value="asp_carb_tr"/>
    <property type="match status" value="1"/>
</dbReference>
<dbReference type="NCBIfam" id="NF002032">
    <property type="entry name" value="PRK00856.1"/>
    <property type="match status" value="1"/>
</dbReference>
<dbReference type="PANTHER" id="PTHR45753:SF6">
    <property type="entry name" value="ASPARTATE CARBAMOYLTRANSFERASE"/>
    <property type="match status" value="1"/>
</dbReference>
<dbReference type="PANTHER" id="PTHR45753">
    <property type="entry name" value="ORNITHINE CARBAMOYLTRANSFERASE, MITOCHONDRIAL"/>
    <property type="match status" value="1"/>
</dbReference>
<dbReference type="Pfam" id="PF00185">
    <property type="entry name" value="OTCace"/>
    <property type="match status" value="1"/>
</dbReference>
<dbReference type="Pfam" id="PF02729">
    <property type="entry name" value="OTCace_N"/>
    <property type="match status" value="1"/>
</dbReference>
<dbReference type="PRINTS" id="PR00100">
    <property type="entry name" value="AOTCASE"/>
</dbReference>
<dbReference type="PRINTS" id="PR00101">
    <property type="entry name" value="ATCASE"/>
</dbReference>
<dbReference type="SUPFAM" id="SSF53671">
    <property type="entry name" value="Aspartate/ornithine carbamoyltransferase"/>
    <property type="match status" value="1"/>
</dbReference>
<dbReference type="PROSITE" id="PS00097">
    <property type="entry name" value="CARBAMOYLTRANSFERASE"/>
    <property type="match status" value="1"/>
</dbReference>
<gene>
    <name evidence="1" type="primary">pyrB</name>
    <name type="ordered locus">SACOL1212</name>
</gene>
<feature type="chain" id="PRO_0000113193" description="Aspartate carbamoyltransferase catalytic subunit">
    <location>
        <begin position="1"/>
        <end position="293"/>
    </location>
</feature>
<feature type="binding site" evidence="1">
    <location>
        <position position="50"/>
    </location>
    <ligand>
        <name>carbamoyl phosphate</name>
        <dbReference type="ChEBI" id="CHEBI:58228"/>
    </ligand>
</feature>
<feature type="binding site" evidence="1">
    <location>
        <position position="51"/>
    </location>
    <ligand>
        <name>carbamoyl phosphate</name>
        <dbReference type="ChEBI" id="CHEBI:58228"/>
    </ligand>
</feature>
<feature type="binding site" evidence="1">
    <location>
        <position position="78"/>
    </location>
    <ligand>
        <name>L-aspartate</name>
        <dbReference type="ChEBI" id="CHEBI:29991"/>
    </ligand>
</feature>
<feature type="binding site" evidence="1">
    <location>
        <position position="100"/>
    </location>
    <ligand>
        <name>carbamoyl phosphate</name>
        <dbReference type="ChEBI" id="CHEBI:58228"/>
    </ligand>
</feature>
<feature type="binding site" evidence="1">
    <location>
        <position position="127"/>
    </location>
    <ligand>
        <name>carbamoyl phosphate</name>
        <dbReference type="ChEBI" id="CHEBI:58228"/>
    </ligand>
</feature>
<feature type="binding site" evidence="1">
    <location>
        <position position="130"/>
    </location>
    <ligand>
        <name>carbamoyl phosphate</name>
        <dbReference type="ChEBI" id="CHEBI:58228"/>
    </ligand>
</feature>
<feature type="binding site" evidence="1">
    <location>
        <position position="160"/>
    </location>
    <ligand>
        <name>L-aspartate</name>
        <dbReference type="ChEBI" id="CHEBI:29991"/>
    </ligand>
</feature>
<feature type="binding site" evidence="1">
    <location>
        <position position="210"/>
    </location>
    <ligand>
        <name>L-aspartate</name>
        <dbReference type="ChEBI" id="CHEBI:29991"/>
    </ligand>
</feature>
<feature type="binding site" evidence="1">
    <location>
        <position position="253"/>
    </location>
    <ligand>
        <name>carbamoyl phosphate</name>
        <dbReference type="ChEBI" id="CHEBI:58228"/>
    </ligand>
</feature>
<feature type="binding site" evidence="1">
    <location>
        <position position="254"/>
    </location>
    <ligand>
        <name>carbamoyl phosphate</name>
        <dbReference type="ChEBI" id="CHEBI:58228"/>
    </ligand>
</feature>
<accession>Q5HGN2</accession>
<sequence length="293" mass="33258">MNHLLSMEHLSTDQIYKLIQKASQFKSGERQLPNFEGKYVANLFFENSTRTKCSFEMAELKLGLKTISFETSTSSVSKGESLYDTCKTLESIGCDLLVIRHPFNNYYEKLANINIPIANAGDGSGQHPTQSLLDLMTIYEEYGYFEGLNVLICGDIKNSRVARSNYHSLKALGANVMFNSPNAWIDDSLEAPYVNIDDVIETVDIVMLLRIQHERHGLAEETRFAADDYHQKHGLNEVRYNKLQEHAIVMHPAPVNRGVEIQSDLVEASKSRIFKQMENGVYLRMAVIDELLK</sequence>
<organism>
    <name type="scientific">Staphylococcus aureus (strain COL)</name>
    <dbReference type="NCBI Taxonomy" id="93062"/>
    <lineage>
        <taxon>Bacteria</taxon>
        <taxon>Bacillati</taxon>
        <taxon>Bacillota</taxon>
        <taxon>Bacilli</taxon>
        <taxon>Bacillales</taxon>
        <taxon>Staphylococcaceae</taxon>
        <taxon>Staphylococcus</taxon>
    </lineage>
</organism>
<proteinExistence type="inferred from homology"/>
<reference key="1">
    <citation type="journal article" date="2005" name="J. Bacteriol.">
        <title>Insights on evolution of virulence and resistance from the complete genome analysis of an early methicillin-resistant Staphylococcus aureus strain and a biofilm-producing methicillin-resistant Staphylococcus epidermidis strain.</title>
        <authorList>
            <person name="Gill S.R."/>
            <person name="Fouts D.E."/>
            <person name="Archer G.L."/>
            <person name="Mongodin E.F."/>
            <person name="DeBoy R.T."/>
            <person name="Ravel J."/>
            <person name="Paulsen I.T."/>
            <person name="Kolonay J.F."/>
            <person name="Brinkac L.M."/>
            <person name="Beanan M.J."/>
            <person name="Dodson R.J."/>
            <person name="Daugherty S.C."/>
            <person name="Madupu R."/>
            <person name="Angiuoli S.V."/>
            <person name="Durkin A.S."/>
            <person name="Haft D.H."/>
            <person name="Vamathevan J.J."/>
            <person name="Khouri H."/>
            <person name="Utterback T.R."/>
            <person name="Lee C."/>
            <person name="Dimitrov G."/>
            <person name="Jiang L."/>
            <person name="Qin H."/>
            <person name="Weidman J."/>
            <person name="Tran K."/>
            <person name="Kang K.H."/>
            <person name="Hance I.R."/>
            <person name="Nelson K.E."/>
            <person name="Fraser C.M."/>
        </authorList>
    </citation>
    <scope>NUCLEOTIDE SEQUENCE [LARGE SCALE GENOMIC DNA]</scope>
    <source>
        <strain>COL</strain>
    </source>
</reference>